<reference key="1">
    <citation type="submission" date="2008-05" db="EMBL/GenBank/DDBJ databases">
        <title>Complete sequence of chromosome 1 of Ralstonia pickettii 12J.</title>
        <authorList>
            <person name="Lucas S."/>
            <person name="Copeland A."/>
            <person name="Lapidus A."/>
            <person name="Glavina del Rio T."/>
            <person name="Dalin E."/>
            <person name="Tice H."/>
            <person name="Bruce D."/>
            <person name="Goodwin L."/>
            <person name="Pitluck S."/>
            <person name="Meincke L."/>
            <person name="Brettin T."/>
            <person name="Detter J.C."/>
            <person name="Han C."/>
            <person name="Kuske C.R."/>
            <person name="Schmutz J."/>
            <person name="Larimer F."/>
            <person name="Land M."/>
            <person name="Hauser L."/>
            <person name="Kyrpides N."/>
            <person name="Mikhailova N."/>
            <person name="Marsh T."/>
            <person name="Richardson P."/>
        </authorList>
    </citation>
    <scope>NUCLEOTIDE SEQUENCE [LARGE SCALE GENOMIC DNA]</scope>
    <source>
        <strain>12J</strain>
    </source>
</reference>
<comment type="catalytic activity">
    <reaction evidence="1">
        <text>tRNA(Gln) + L-glutamine + ATP = L-glutaminyl-tRNA(Gln) + AMP + diphosphate</text>
        <dbReference type="Rhea" id="RHEA:20121"/>
        <dbReference type="Rhea" id="RHEA-COMP:9662"/>
        <dbReference type="Rhea" id="RHEA-COMP:9681"/>
        <dbReference type="ChEBI" id="CHEBI:30616"/>
        <dbReference type="ChEBI" id="CHEBI:33019"/>
        <dbReference type="ChEBI" id="CHEBI:58359"/>
        <dbReference type="ChEBI" id="CHEBI:78442"/>
        <dbReference type="ChEBI" id="CHEBI:78521"/>
        <dbReference type="ChEBI" id="CHEBI:456215"/>
        <dbReference type="EC" id="6.1.1.18"/>
    </reaction>
</comment>
<comment type="subunit">
    <text evidence="1">Monomer.</text>
</comment>
<comment type="subcellular location">
    <subcellularLocation>
        <location evidence="1">Cytoplasm</location>
    </subcellularLocation>
</comment>
<comment type="similarity">
    <text evidence="1">Belongs to the class-I aminoacyl-tRNA synthetase family.</text>
</comment>
<feature type="chain" id="PRO_1000095507" description="Glutamine--tRNA ligase">
    <location>
        <begin position="1"/>
        <end position="576"/>
    </location>
</feature>
<feature type="short sequence motif" description="'HIGH' region" evidence="1">
    <location>
        <begin position="47"/>
        <end position="57"/>
    </location>
</feature>
<feature type="short sequence motif" description="'KMSKS' region" evidence="1">
    <location>
        <begin position="290"/>
        <end position="294"/>
    </location>
</feature>
<feature type="binding site" evidence="1">
    <location>
        <begin position="48"/>
        <end position="50"/>
    </location>
    <ligand>
        <name>ATP</name>
        <dbReference type="ChEBI" id="CHEBI:30616"/>
    </ligand>
</feature>
<feature type="binding site" evidence="1">
    <location>
        <begin position="54"/>
        <end position="60"/>
    </location>
    <ligand>
        <name>ATP</name>
        <dbReference type="ChEBI" id="CHEBI:30616"/>
    </ligand>
</feature>
<feature type="binding site" evidence="1">
    <location>
        <position position="80"/>
    </location>
    <ligand>
        <name>L-glutamine</name>
        <dbReference type="ChEBI" id="CHEBI:58359"/>
    </ligand>
</feature>
<feature type="binding site" evidence="1">
    <location>
        <position position="229"/>
    </location>
    <ligand>
        <name>L-glutamine</name>
        <dbReference type="ChEBI" id="CHEBI:58359"/>
    </ligand>
</feature>
<feature type="binding site" evidence="1">
    <location>
        <position position="248"/>
    </location>
    <ligand>
        <name>ATP</name>
        <dbReference type="ChEBI" id="CHEBI:30616"/>
    </ligand>
</feature>
<feature type="binding site" evidence="1">
    <location>
        <begin position="283"/>
        <end position="284"/>
    </location>
    <ligand>
        <name>ATP</name>
        <dbReference type="ChEBI" id="CHEBI:30616"/>
    </ligand>
</feature>
<sequence>MSQDNATAPTSNFLRQIIDADLAQGTYADRKDATGQPIPPVVTRFPPEPNGYLHIGHAKSIWVNFGMARDYNGRCHLRFDDTNPVKEDTEYVDSIIDAVHWLGYSWSDAGGEHLYYASDYFEQLYGFAEVLIQRGVAYVDSQSAEQIAANRGDFTRPGTLSPFRDRSVDENLALFRDMRAGKYKDGEHVLRAKIDMAAPNIVMRDPVLYRIRHAHHHRTGDAWCIYPMYDFTHCISDALENITHSLCTLEFENNRPLYDWVLDHLRDAGVLAAPLPHQYEFARLHLTYAITSKRKLLQLVTEKRVDGWDDPRMPTLVGIRRRGYTPESIQLFCERVGVSKADSWIDMSILEGAVRDDLDARAPRSVAVLDPVKLVLDNVPADFNEPCSAPVHPKQPELGRREFPLTRELWIEREDFTETPPKGYFRLFPGNKVRLRYGYVIECTGCDKDAAGNITAVHANIIPDTKSGTPGADSVKVKGNIHWVSAAHALEAEVRLYDRLFSDPQPDSGDKNFLDALNPNSKKIVKAFLEPTLATAKAEDRFQFERHGYFVADRIDSQPGKPVFNRVVGLKDSWGK</sequence>
<organism>
    <name type="scientific">Ralstonia pickettii (strain 12J)</name>
    <dbReference type="NCBI Taxonomy" id="402626"/>
    <lineage>
        <taxon>Bacteria</taxon>
        <taxon>Pseudomonadati</taxon>
        <taxon>Pseudomonadota</taxon>
        <taxon>Betaproteobacteria</taxon>
        <taxon>Burkholderiales</taxon>
        <taxon>Burkholderiaceae</taxon>
        <taxon>Ralstonia</taxon>
    </lineage>
</organism>
<dbReference type="EC" id="6.1.1.18" evidence="1"/>
<dbReference type="EMBL" id="CP001068">
    <property type="protein sequence ID" value="ACD25888.1"/>
    <property type="molecule type" value="Genomic_DNA"/>
</dbReference>
<dbReference type="SMR" id="B2U846"/>
<dbReference type="STRING" id="402626.Rpic_0737"/>
<dbReference type="KEGG" id="rpi:Rpic_0737"/>
<dbReference type="PATRIC" id="fig|402626.5.peg.1935"/>
<dbReference type="eggNOG" id="COG0008">
    <property type="taxonomic scope" value="Bacteria"/>
</dbReference>
<dbReference type="HOGENOM" id="CLU_001882_2_3_4"/>
<dbReference type="GO" id="GO:0005829">
    <property type="term" value="C:cytosol"/>
    <property type="evidence" value="ECO:0007669"/>
    <property type="project" value="TreeGrafter"/>
</dbReference>
<dbReference type="GO" id="GO:0005524">
    <property type="term" value="F:ATP binding"/>
    <property type="evidence" value="ECO:0007669"/>
    <property type="project" value="UniProtKB-UniRule"/>
</dbReference>
<dbReference type="GO" id="GO:0004819">
    <property type="term" value="F:glutamine-tRNA ligase activity"/>
    <property type="evidence" value="ECO:0007669"/>
    <property type="project" value="UniProtKB-UniRule"/>
</dbReference>
<dbReference type="GO" id="GO:0006425">
    <property type="term" value="P:glutaminyl-tRNA aminoacylation"/>
    <property type="evidence" value="ECO:0007669"/>
    <property type="project" value="InterPro"/>
</dbReference>
<dbReference type="GO" id="GO:0006424">
    <property type="term" value="P:glutamyl-tRNA aminoacylation"/>
    <property type="evidence" value="ECO:0007669"/>
    <property type="project" value="UniProtKB-UniRule"/>
</dbReference>
<dbReference type="CDD" id="cd00807">
    <property type="entry name" value="GlnRS_core"/>
    <property type="match status" value="1"/>
</dbReference>
<dbReference type="FunFam" id="1.10.1160.10:FF:000001">
    <property type="entry name" value="Glutamine--tRNA ligase"/>
    <property type="match status" value="1"/>
</dbReference>
<dbReference type="FunFam" id="3.40.50.620:FF:000037">
    <property type="entry name" value="Glutamine--tRNA ligase cytoplasmic"/>
    <property type="match status" value="1"/>
</dbReference>
<dbReference type="Gene3D" id="3.40.50.620">
    <property type="entry name" value="HUPs"/>
    <property type="match status" value="1"/>
</dbReference>
<dbReference type="Gene3D" id="2.40.240.10">
    <property type="entry name" value="Ribosomal Protein L25, Chain P"/>
    <property type="match status" value="2"/>
</dbReference>
<dbReference type="HAMAP" id="MF_00126">
    <property type="entry name" value="Gln_tRNA_synth"/>
    <property type="match status" value="1"/>
</dbReference>
<dbReference type="InterPro" id="IPR001412">
    <property type="entry name" value="aa-tRNA-synth_I_CS"/>
</dbReference>
<dbReference type="InterPro" id="IPR004514">
    <property type="entry name" value="Gln-tRNA-synth"/>
</dbReference>
<dbReference type="InterPro" id="IPR050132">
    <property type="entry name" value="Gln/Glu-tRNA_Ligase"/>
</dbReference>
<dbReference type="InterPro" id="IPR022861">
    <property type="entry name" value="Gln_tRNA_ligase_bac"/>
</dbReference>
<dbReference type="InterPro" id="IPR000924">
    <property type="entry name" value="Glu/Gln-tRNA-synth"/>
</dbReference>
<dbReference type="InterPro" id="IPR020058">
    <property type="entry name" value="Glu/Gln-tRNA-synth_Ib_cat-dom"/>
</dbReference>
<dbReference type="InterPro" id="IPR020059">
    <property type="entry name" value="Glu/Gln-tRNA-synth_Ib_codon-bd"/>
</dbReference>
<dbReference type="InterPro" id="IPR020056">
    <property type="entry name" value="Rbsml_bL25/Gln-tRNA_synth_N"/>
</dbReference>
<dbReference type="InterPro" id="IPR011035">
    <property type="entry name" value="Ribosomal_bL25/Gln-tRNA_synth"/>
</dbReference>
<dbReference type="InterPro" id="IPR014729">
    <property type="entry name" value="Rossmann-like_a/b/a_fold"/>
</dbReference>
<dbReference type="InterPro" id="IPR049437">
    <property type="entry name" value="tRNA-synt_1c_C2"/>
</dbReference>
<dbReference type="NCBIfam" id="TIGR00440">
    <property type="entry name" value="glnS"/>
    <property type="match status" value="1"/>
</dbReference>
<dbReference type="NCBIfam" id="NF011291">
    <property type="entry name" value="PRK14703.1"/>
    <property type="match status" value="1"/>
</dbReference>
<dbReference type="PANTHER" id="PTHR43097:SF5">
    <property type="entry name" value="GLUTAMATE--TRNA LIGASE"/>
    <property type="match status" value="1"/>
</dbReference>
<dbReference type="PANTHER" id="PTHR43097">
    <property type="entry name" value="GLUTAMINE-TRNA LIGASE"/>
    <property type="match status" value="1"/>
</dbReference>
<dbReference type="Pfam" id="PF00749">
    <property type="entry name" value="tRNA-synt_1c"/>
    <property type="match status" value="1"/>
</dbReference>
<dbReference type="Pfam" id="PF03950">
    <property type="entry name" value="tRNA-synt_1c_C"/>
    <property type="match status" value="1"/>
</dbReference>
<dbReference type="Pfam" id="PF20974">
    <property type="entry name" value="tRNA-synt_1c_C2"/>
    <property type="match status" value="1"/>
</dbReference>
<dbReference type="PRINTS" id="PR00987">
    <property type="entry name" value="TRNASYNTHGLU"/>
</dbReference>
<dbReference type="SUPFAM" id="SSF52374">
    <property type="entry name" value="Nucleotidylyl transferase"/>
    <property type="match status" value="1"/>
</dbReference>
<dbReference type="SUPFAM" id="SSF50715">
    <property type="entry name" value="Ribosomal protein L25-like"/>
    <property type="match status" value="1"/>
</dbReference>
<dbReference type="PROSITE" id="PS00178">
    <property type="entry name" value="AA_TRNA_LIGASE_I"/>
    <property type="match status" value="1"/>
</dbReference>
<evidence type="ECO:0000255" key="1">
    <source>
        <dbReference type="HAMAP-Rule" id="MF_00126"/>
    </source>
</evidence>
<gene>
    <name evidence="1" type="primary">glnS</name>
    <name type="ordered locus">Rpic_0737</name>
</gene>
<protein>
    <recommendedName>
        <fullName evidence="1">Glutamine--tRNA ligase</fullName>
        <ecNumber evidence="1">6.1.1.18</ecNumber>
    </recommendedName>
    <alternativeName>
        <fullName evidence="1">Glutaminyl-tRNA synthetase</fullName>
        <shortName evidence="1">GlnRS</shortName>
    </alternativeName>
</protein>
<proteinExistence type="inferred from homology"/>
<name>SYQ_RALPJ</name>
<accession>B2U846</accession>
<keyword id="KW-0030">Aminoacyl-tRNA synthetase</keyword>
<keyword id="KW-0067">ATP-binding</keyword>
<keyword id="KW-0963">Cytoplasm</keyword>
<keyword id="KW-0436">Ligase</keyword>
<keyword id="KW-0547">Nucleotide-binding</keyword>
<keyword id="KW-0648">Protein biosynthesis</keyword>